<protein>
    <recommendedName>
        <fullName evidence="1">Large ribosomal subunit protein bL35</fullName>
    </recommendedName>
    <alternativeName>
        <fullName evidence="2">50S ribosomal protein L35</fullName>
    </alternativeName>
</protein>
<dbReference type="EMBL" id="CP001074">
    <property type="protein sequence ID" value="ACE89291.1"/>
    <property type="molecule type" value="Genomic_DNA"/>
</dbReference>
<dbReference type="SMR" id="B3PYE0"/>
<dbReference type="KEGG" id="rec:RHECIAT_CH0000297"/>
<dbReference type="eggNOG" id="COG0291">
    <property type="taxonomic scope" value="Bacteria"/>
</dbReference>
<dbReference type="HOGENOM" id="CLU_169643_2_1_5"/>
<dbReference type="Proteomes" id="UP000008817">
    <property type="component" value="Chromosome"/>
</dbReference>
<dbReference type="GO" id="GO:0022625">
    <property type="term" value="C:cytosolic large ribosomal subunit"/>
    <property type="evidence" value="ECO:0007669"/>
    <property type="project" value="TreeGrafter"/>
</dbReference>
<dbReference type="GO" id="GO:0003735">
    <property type="term" value="F:structural constituent of ribosome"/>
    <property type="evidence" value="ECO:0007669"/>
    <property type="project" value="InterPro"/>
</dbReference>
<dbReference type="GO" id="GO:0006412">
    <property type="term" value="P:translation"/>
    <property type="evidence" value="ECO:0007669"/>
    <property type="project" value="UniProtKB-UniRule"/>
</dbReference>
<dbReference type="FunFam" id="4.10.410.60:FF:000001">
    <property type="entry name" value="50S ribosomal protein L35"/>
    <property type="match status" value="1"/>
</dbReference>
<dbReference type="Gene3D" id="4.10.410.60">
    <property type="match status" value="1"/>
</dbReference>
<dbReference type="HAMAP" id="MF_00514">
    <property type="entry name" value="Ribosomal_bL35"/>
    <property type="match status" value="1"/>
</dbReference>
<dbReference type="InterPro" id="IPR001706">
    <property type="entry name" value="Ribosomal_bL35"/>
</dbReference>
<dbReference type="InterPro" id="IPR021137">
    <property type="entry name" value="Ribosomal_bL35-like"/>
</dbReference>
<dbReference type="InterPro" id="IPR018265">
    <property type="entry name" value="Ribosomal_bL35_CS"/>
</dbReference>
<dbReference type="InterPro" id="IPR037229">
    <property type="entry name" value="Ribosomal_bL35_sf"/>
</dbReference>
<dbReference type="NCBIfam" id="TIGR00001">
    <property type="entry name" value="rpmI_bact"/>
    <property type="match status" value="1"/>
</dbReference>
<dbReference type="PANTHER" id="PTHR33343">
    <property type="entry name" value="54S RIBOSOMAL PROTEIN BL35M"/>
    <property type="match status" value="1"/>
</dbReference>
<dbReference type="PANTHER" id="PTHR33343:SF1">
    <property type="entry name" value="LARGE RIBOSOMAL SUBUNIT PROTEIN BL35M"/>
    <property type="match status" value="1"/>
</dbReference>
<dbReference type="Pfam" id="PF01632">
    <property type="entry name" value="Ribosomal_L35p"/>
    <property type="match status" value="1"/>
</dbReference>
<dbReference type="PRINTS" id="PR00064">
    <property type="entry name" value="RIBOSOMALL35"/>
</dbReference>
<dbReference type="SUPFAM" id="SSF143034">
    <property type="entry name" value="L35p-like"/>
    <property type="match status" value="1"/>
</dbReference>
<dbReference type="PROSITE" id="PS00936">
    <property type="entry name" value="RIBOSOMAL_L35"/>
    <property type="match status" value="1"/>
</dbReference>
<gene>
    <name evidence="1" type="primary">rpmI</name>
    <name type="ordered locus">RHECIAT_CH0000297</name>
</gene>
<feature type="chain" id="PRO_1000127397" description="Large ribosomal subunit protein bL35">
    <location>
        <begin position="1"/>
        <end position="67"/>
    </location>
</feature>
<keyword id="KW-0687">Ribonucleoprotein</keyword>
<keyword id="KW-0689">Ribosomal protein</keyword>
<comment type="similarity">
    <text evidence="1">Belongs to the bacterial ribosomal protein bL35 family.</text>
</comment>
<reference key="1">
    <citation type="journal article" date="2010" name="Appl. Environ. Microbiol.">
        <title>Conserved symbiotic plasmid DNA sequences in the multireplicon pangenomic structure of Rhizobium etli.</title>
        <authorList>
            <person name="Gonzalez V."/>
            <person name="Acosta J.L."/>
            <person name="Santamaria R.I."/>
            <person name="Bustos P."/>
            <person name="Fernandez J.L."/>
            <person name="Hernandez Gonzalez I.L."/>
            <person name="Diaz R."/>
            <person name="Flores M."/>
            <person name="Palacios R."/>
            <person name="Mora J."/>
            <person name="Davila G."/>
        </authorList>
    </citation>
    <scope>NUCLEOTIDE SEQUENCE [LARGE SCALE GENOMIC DNA]</scope>
    <source>
        <strain>CIAT 652</strain>
    </source>
</reference>
<name>RL35_RHIE6</name>
<sequence length="67" mass="7414">MPKMKTKSSAKKRFKITATGKVKAAAAGKRHGMIKRTNKFIRDARGTMVLAEPDGRKVIKNYLPNGL</sequence>
<organism>
    <name type="scientific">Rhizobium etli (strain CIAT 652)</name>
    <dbReference type="NCBI Taxonomy" id="491916"/>
    <lineage>
        <taxon>Bacteria</taxon>
        <taxon>Pseudomonadati</taxon>
        <taxon>Pseudomonadota</taxon>
        <taxon>Alphaproteobacteria</taxon>
        <taxon>Hyphomicrobiales</taxon>
        <taxon>Rhizobiaceae</taxon>
        <taxon>Rhizobium/Agrobacterium group</taxon>
        <taxon>Rhizobium</taxon>
    </lineage>
</organism>
<evidence type="ECO:0000255" key="1">
    <source>
        <dbReference type="HAMAP-Rule" id="MF_00514"/>
    </source>
</evidence>
<evidence type="ECO:0000305" key="2"/>
<proteinExistence type="inferred from homology"/>
<accession>B3PYE0</accession>